<sequence>MTRSGHPVTLDDLPLRADLRGKAPYGAPQLAVPVRLNTNENPHPPTRALVDDVVRSVREAAIDLHRYPDRDAVALRADLAGYLTAQTGIQLGVENIWAANGSNEILQQLLQAFGGPGRSAIGFVPSYSMHPIISDGTHTEWIEASRANDFGLDVDVAVAAVVDRKPDVVFIASPNNPSGQSVSLPDLCKLLDVAPGIAIVDEAYGEFSSQPSAVSLVEEYPSKLVVTRTMSKAFAFAGGRLGYLIATPAVIDAMLLVRLPYHLSSVTQAAARAALRHSDDTLSSVAALIAERERVTTSLNDMGFRVIPSDANFVLFGEFADAPAAWRRYLEAGILIRDVGIPGYLRATTGLAEENDAFLRASARIATDLVPVTRSPVGAP</sequence>
<dbReference type="EC" id="2.6.1.9" evidence="1 4"/>
<dbReference type="EMBL" id="AL123456">
    <property type="protein sequence ID" value="CCP44364.1"/>
    <property type="molecule type" value="Genomic_DNA"/>
</dbReference>
<dbReference type="PIR" id="B70544">
    <property type="entry name" value="B70544"/>
</dbReference>
<dbReference type="RefSeq" id="WP_003407947.1">
    <property type="nucleotide sequence ID" value="NZ_NVQJ01000016.1"/>
</dbReference>
<dbReference type="RefSeq" id="YP_177823.1">
    <property type="nucleotide sequence ID" value="NC_000962.3"/>
</dbReference>
<dbReference type="PDB" id="4R8D">
    <property type="method" value="X-ray"/>
    <property type="resolution" value="2.05 A"/>
    <property type="chains" value="A/B=1-380"/>
</dbReference>
<dbReference type="PDB" id="4RAE">
    <property type="method" value="X-ray"/>
    <property type="resolution" value="2.59 A"/>
    <property type="chains" value="A/B=1-380"/>
</dbReference>
<dbReference type="PDBsum" id="4R8D"/>
<dbReference type="PDBsum" id="4RAE"/>
<dbReference type="SMR" id="P9WML7"/>
<dbReference type="FunCoup" id="P9WML7">
    <property type="interactions" value="193"/>
</dbReference>
<dbReference type="STRING" id="83332.Rv1600"/>
<dbReference type="PaxDb" id="83332-Rv1600"/>
<dbReference type="DNASU" id="886298"/>
<dbReference type="GeneID" id="886298"/>
<dbReference type="KEGG" id="mtu:Rv1600"/>
<dbReference type="KEGG" id="mtv:RVBD_1600"/>
<dbReference type="TubercuList" id="Rv1600"/>
<dbReference type="eggNOG" id="COG0079">
    <property type="taxonomic scope" value="Bacteria"/>
</dbReference>
<dbReference type="InParanoid" id="P9WML7"/>
<dbReference type="OrthoDB" id="9809616at2"/>
<dbReference type="PhylomeDB" id="P9WML7"/>
<dbReference type="BRENDA" id="2.6.1.9">
    <property type="organism ID" value="3445"/>
</dbReference>
<dbReference type="UniPathway" id="UPA00031">
    <property type="reaction ID" value="UER00012"/>
</dbReference>
<dbReference type="EvolutionaryTrace" id="P9WML7"/>
<dbReference type="Proteomes" id="UP000001584">
    <property type="component" value="Chromosome"/>
</dbReference>
<dbReference type="GO" id="GO:0009274">
    <property type="term" value="C:peptidoglycan-based cell wall"/>
    <property type="evidence" value="ECO:0007005"/>
    <property type="project" value="MTBBASE"/>
</dbReference>
<dbReference type="GO" id="GO:0005886">
    <property type="term" value="C:plasma membrane"/>
    <property type="evidence" value="ECO:0007005"/>
    <property type="project" value="MTBBASE"/>
</dbReference>
<dbReference type="GO" id="GO:0004400">
    <property type="term" value="F:histidinol-phosphate transaminase activity"/>
    <property type="evidence" value="ECO:0007669"/>
    <property type="project" value="UniProtKB-UniRule"/>
</dbReference>
<dbReference type="GO" id="GO:0030170">
    <property type="term" value="F:pyridoxal phosphate binding"/>
    <property type="evidence" value="ECO:0007669"/>
    <property type="project" value="InterPro"/>
</dbReference>
<dbReference type="GO" id="GO:0000105">
    <property type="term" value="P:L-histidine biosynthetic process"/>
    <property type="evidence" value="ECO:0007669"/>
    <property type="project" value="UniProtKB-UniRule"/>
</dbReference>
<dbReference type="CDD" id="cd00609">
    <property type="entry name" value="AAT_like"/>
    <property type="match status" value="1"/>
</dbReference>
<dbReference type="FunFam" id="3.40.640.10:FF:000138">
    <property type="entry name" value="Histidinol-phosphate aminotransferase"/>
    <property type="match status" value="1"/>
</dbReference>
<dbReference type="Gene3D" id="3.90.1150.10">
    <property type="entry name" value="Aspartate Aminotransferase, domain 1"/>
    <property type="match status" value="1"/>
</dbReference>
<dbReference type="Gene3D" id="3.40.640.10">
    <property type="entry name" value="Type I PLP-dependent aspartate aminotransferase-like (Major domain)"/>
    <property type="match status" value="1"/>
</dbReference>
<dbReference type="HAMAP" id="MF_01023">
    <property type="entry name" value="HisC_aminotrans_2"/>
    <property type="match status" value="1"/>
</dbReference>
<dbReference type="InterPro" id="IPR001917">
    <property type="entry name" value="Aminotrans_II_pyridoxalP_BS"/>
</dbReference>
<dbReference type="InterPro" id="IPR004839">
    <property type="entry name" value="Aminotransferase_I/II_large"/>
</dbReference>
<dbReference type="InterPro" id="IPR005861">
    <property type="entry name" value="HisP_aminotrans"/>
</dbReference>
<dbReference type="InterPro" id="IPR015424">
    <property type="entry name" value="PyrdxlP-dep_Trfase"/>
</dbReference>
<dbReference type="InterPro" id="IPR015421">
    <property type="entry name" value="PyrdxlP-dep_Trfase_major"/>
</dbReference>
<dbReference type="InterPro" id="IPR015422">
    <property type="entry name" value="PyrdxlP-dep_Trfase_small"/>
</dbReference>
<dbReference type="NCBIfam" id="TIGR01141">
    <property type="entry name" value="hisC"/>
    <property type="match status" value="1"/>
</dbReference>
<dbReference type="NCBIfam" id="NF002877">
    <property type="entry name" value="PRK03317.1"/>
    <property type="match status" value="1"/>
</dbReference>
<dbReference type="PANTHER" id="PTHR42885:SF2">
    <property type="entry name" value="HISTIDINOL-PHOSPHATE AMINOTRANSFERASE"/>
    <property type="match status" value="1"/>
</dbReference>
<dbReference type="PANTHER" id="PTHR42885">
    <property type="entry name" value="HISTIDINOL-PHOSPHATE AMINOTRANSFERASE-RELATED"/>
    <property type="match status" value="1"/>
</dbReference>
<dbReference type="Pfam" id="PF00155">
    <property type="entry name" value="Aminotran_1_2"/>
    <property type="match status" value="1"/>
</dbReference>
<dbReference type="SUPFAM" id="SSF53383">
    <property type="entry name" value="PLP-dependent transferases"/>
    <property type="match status" value="1"/>
</dbReference>
<dbReference type="PROSITE" id="PS00599">
    <property type="entry name" value="AA_TRANSFER_CLASS_2"/>
    <property type="match status" value="1"/>
</dbReference>
<feature type="chain" id="PRO_0000153397" description="Histidinol-phosphate aminotransferase">
    <location>
        <begin position="1"/>
        <end position="380"/>
    </location>
</feature>
<feature type="modified residue" description="N6-(pyridoxal phosphate)lysine" evidence="1 4 9">
    <location>
        <position position="232"/>
    </location>
</feature>
<feature type="mutagenesis site" description="Retains only 20% of the activity with histidinol phosphate as substrate, but no significant loss of activity is observed with phenylalanine." evidence="4">
    <original>Y</original>
    <variation>F</variation>
    <location>
        <position position="127"/>
    </location>
</feature>
<feature type="helix" evidence="11">
    <location>
        <begin position="10"/>
        <end position="12"/>
    </location>
</feature>
<feature type="helix" evidence="11">
    <location>
        <begin position="17"/>
        <end position="19"/>
    </location>
</feature>
<feature type="helix" evidence="12">
    <location>
        <begin position="27"/>
        <end position="30"/>
    </location>
</feature>
<feature type="strand" evidence="11">
    <location>
        <begin position="33"/>
        <end position="35"/>
    </location>
</feature>
<feature type="helix" evidence="11">
    <location>
        <begin position="47"/>
        <end position="61"/>
    </location>
</feature>
<feature type="turn" evidence="11">
    <location>
        <begin position="62"/>
        <end position="65"/>
    </location>
</feature>
<feature type="helix" evidence="11">
    <location>
        <begin position="73"/>
        <end position="87"/>
    </location>
</feature>
<feature type="helix" evidence="11">
    <location>
        <begin position="93"/>
        <end position="95"/>
    </location>
</feature>
<feature type="strand" evidence="11">
    <location>
        <begin position="96"/>
        <end position="100"/>
    </location>
</feature>
<feature type="helix" evidence="11">
    <location>
        <begin position="101"/>
        <end position="113"/>
    </location>
</feature>
<feature type="strand" evidence="11">
    <location>
        <begin position="119"/>
        <end position="125"/>
    </location>
</feature>
<feature type="helix" evidence="11">
    <location>
        <begin position="129"/>
        <end position="136"/>
    </location>
</feature>
<feature type="strand" evidence="11">
    <location>
        <begin position="140"/>
        <end position="145"/>
    </location>
</feature>
<feature type="turn" evidence="12">
    <location>
        <begin position="147"/>
        <end position="149"/>
    </location>
</feature>
<feature type="helix" evidence="11">
    <location>
        <begin position="154"/>
        <end position="164"/>
    </location>
</feature>
<feature type="strand" evidence="11">
    <location>
        <begin position="167"/>
        <end position="174"/>
    </location>
</feature>
<feature type="turn" evidence="11">
    <location>
        <begin position="176"/>
        <end position="178"/>
    </location>
</feature>
<feature type="helix" evidence="11">
    <location>
        <begin position="184"/>
        <end position="193"/>
    </location>
</feature>
<feature type="strand" evidence="11">
    <location>
        <begin position="195"/>
        <end position="201"/>
    </location>
</feature>
<feature type="helix" evidence="11">
    <location>
        <begin position="205"/>
        <end position="207"/>
    </location>
</feature>
<feature type="helix" evidence="11">
    <location>
        <begin position="213"/>
        <end position="216"/>
    </location>
</feature>
<feature type="turn" evidence="11">
    <location>
        <begin position="217"/>
        <end position="219"/>
    </location>
</feature>
<feature type="turn" evidence="11">
    <location>
        <begin position="221"/>
        <end position="223"/>
    </location>
</feature>
<feature type="strand" evidence="11">
    <location>
        <begin position="224"/>
        <end position="232"/>
    </location>
</feature>
<feature type="helix" evidence="11">
    <location>
        <begin position="237"/>
        <end position="239"/>
    </location>
</feature>
<feature type="strand" evidence="11">
    <location>
        <begin position="242"/>
        <end position="245"/>
    </location>
</feature>
<feature type="helix" evidence="11">
    <location>
        <begin position="248"/>
        <end position="257"/>
    </location>
</feature>
<feature type="helix" evidence="11">
    <location>
        <begin position="265"/>
        <end position="275"/>
    </location>
</feature>
<feature type="helix" evidence="11">
    <location>
        <begin position="278"/>
        <end position="301"/>
    </location>
</feature>
<feature type="strand" evidence="11">
    <location>
        <begin position="310"/>
        <end position="317"/>
    </location>
</feature>
<feature type="strand" evidence="11">
    <location>
        <begin position="319"/>
        <end position="321"/>
    </location>
</feature>
<feature type="helix" evidence="11">
    <location>
        <begin position="322"/>
        <end position="331"/>
    </location>
</feature>
<feature type="strand" evidence="11">
    <location>
        <begin position="344"/>
        <end position="348"/>
    </location>
</feature>
<feature type="helix" evidence="11">
    <location>
        <begin position="352"/>
        <end position="365"/>
    </location>
</feature>
<feature type="helix" evidence="11">
    <location>
        <begin position="366"/>
        <end position="368"/>
    </location>
</feature>
<comment type="function">
    <text evidence="4">Aminotransferase that catalyzes the conversion of histidinol phosphate and 2-oxoglutarate into L-glutamate and imidazole acetol phosphate (PubMed:26738801). Shows lower activity with aromatic amino acids (PubMed:26738801).</text>
</comment>
<comment type="catalytic activity">
    <reaction evidence="1 4">
        <text>L-histidinol phosphate + 2-oxoglutarate = 3-(imidazol-4-yl)-2-oxopropyl phosphate + L-glutamate</text>
        <dbReference type="Rhea" id="RHEA:23744"/>
        <dbReference type="ChEBI" id="CHEBI:16810"/>
        <dbReference type="ChEBI" id="CHEBI:29985"/>
        <dbReference type="ChEBI" id="CHEBI:57766"/>
        <dbReference type="ChEBI" id="CHEBI:57980"/>
        <dbReference type="EC" id="2.6.1.9"/>
    </reaction>
</comment>
<comment type="cofactor">
    <cofactor evidence="1 4">
        <name>pyridoxal 5'-phosphate</name>
        <dbReference type="ChEBI" id="CHEBI:597326"/>
    </cofactor>
</comment>
<comment type="activity regulation">
    <text evidence="4">Inhibited by 2-(N-morpholino)ethanesulfonic acid (MES).</text>
</comment>
<comment type="biophysicochemical properties">
    <kinetics>
        <KM evidence="4">0.42 mM for histidinol phosphate</KM>
        <KM evidence="4">7.1 mM for phenylalanine</KM>
        <KM evidence="4">9.76 mM for tyrosine</KM>
        <text evidence="4">kcat is 426 sec(-1) with histidinol phosphate as substrate. kcat is 220 sec(-1) with phenylalanine as substrate. kcat is 3100 sec(-1) with tyrosine as substrate.</text>
    </kinetics>
</comment>
<comment type="pathway">
    <text evidence="1">Amino-acid biosynthesis; L-histidine biosynthesis; L-histidine from 5-phospho-alpha-D-ribose 1-diphosphate: step 7/9.</text>
</comment>
<comment type="subunit">
    <text evidence="1 3 4">Homodimer.</text>
</comment>
<comment type="domain">
    <text evidence="4">Hydrophilic residues in the substrate binding pocket and N-terminal lid allow the entry and binding of the preferential substrate, histidinol phosphate.</text>
</comment>
<comment type="miscellaneous">
    <text evidence="2">Was identified as a high-confidence drug target.</text>
</comment>
<comment type="similarity">
    <text evidence="7">Belongs to the class-II pyridoxal-phosphate-dependent aminotransferase family. Histidinol-phosphate aminotransferase subfamily.</text>
</comment>
<organism>
    <name type="scientific">Mycobacterium tuberculosis (strain ATCC 25618 / H37Rv)</name>
    <dbReference type="NCBI Taxonomy" id="83332"/>
    <lineage>
        <taxon>Bacteria</taxon>
        <taxon>Bacillati</taxon>
        <taxon>Actinomycetota</taxon>
        <taxon>Actinomycetes</taxon>
        <taxon>Mycobacteriales</taxon>
        <taxon>Mycobacteriaceae</taxon>
        <taxon>Mycobacterium</taxon>
        <taxon>Mycobacterium tuberculosis complex</taxon>
    </lineage>
</organism>
<evidence type="ECO:0000255" key="1">
    <source>
        <dbReference type="HAMAP-Rule" id="MF_01023"/>
    </source>
</evidence>
<evidence type="ECO:0000269" key="2">
    <source>
    </source>
</evidence>
<evidence type="ECO:0000269" key="3">
    <source>
    </source>
</evidence>
<evidence type="ECO:0000269" key="4">
    <source>
    </source>
</evidence>
<evidence type="ECO:0000303" key="5">
    <source>
    </source>
</evidence>
<evidence type="ECO:0000303" key="6">
    <source>
    </source>
</evidence>
<evidence type="ECO:0000305" key="7"/>
<evidence type="ECO:0000312" key="8">
    <source>
        <dbReference type="EMBL" id="CCP44364.1"/>
    </source>
</evidence>
<evidence type="ECO:0007744" key="9">
    <source>
        <dbReference type="PDB" id="4R8D"/>
    </source>
</evidence>
<evidence type="ECO:0007744" key="10">
    <source>
        <dbReference type="PDB" id="4RAE"/>
    </source>
</evidence>
<evidence type="ECO:0007829" key="11">
    <source>
        <dbReference type="PDB" id="4R8D"/>
    </source>
</evidence>
<evidence type="ECO:0007829" key="12">
    <source>
        <dbReference type="PDB" id="4RAE"/>
    </source>
</evidence>
<gene>
    <name evidence="5" type="primary">hisC</name>
    <name evidence="8" type="synonym">hisC1</name>
    <name evidence="8" type="ordered locus">Rv1600</name>
    <name type="ORF">MTCY336.04c</name>
</gene>
<protein>
    <recommendedName>
        <fullName evidence="1 5">Histidinol-phosphate aminotransferase</fullName>
        <shortName evidence="6">HspAT</shortName>
        <ecNumber evidence="1 4">2.6.1.9</ecNumber>
    </recommendedName>
    <alternativeName>
        <fullName evidence="1">Imidazole acetol-phosphate transaminase</fullName>
    </alternativeName>
</protein>
<keyword id="KW-0002">3D-structure</keyword>
<keyword id="KW-0028">Amino-acid biosynthesis</keyword>
<keyword id="KW-0032">Aminotransferase</keyword>
<keyword id="KW-0368">Histidine biosynthesis</keyword>
<keyword id="KW-0663">Pyridoxal phosphate</keyword>
<keyword id="KW-1185">Reference proteome</keyword>
<keyword id="KW-0808">Transferase</keyword>
<name>HIS8_MYCTU</name>
<accession>P9WML7</accession>
<accession>L0T9Y3</accession>
<accession>O06591</accession>
<accession>P0A678</accession>
<reference key="1">
    <citation type="journal article" date="1998" name="Nature">
        <title>Deciphering the biology of Mycobacterium tuberculosis from the complete genome sequence.</title>
        <authorList>
            <person name="Cole S.T."/>
            <person name="Brosch R."/>
            <person name="Parkhill J."/>
            <person name="Garnier T."/>
            <person name="Churcher C.M."/>
            <person name="Harris D.E."/>
            <person name="Gordon S.V."/>
            <person name="Eiglmeier K."/>
            <person name="Gas S."/>
            <person name="Barry C.E. III"/>
            <person name="Tekaia F."/>
            <person name="Badcock K."/>
            <person name="Basham D."/>
            <person name="Brown D."/>
            <person name="Chillingworth T."/>
            <person name="Connor R."/>
            <person name="Davies R.M."/>
            <person name="Devlin K."/>
            <person name="Feltwell T."/>
            <person name="Gentles S."/>
            <person name="Hamlin N."/>
            <person name="Holroyd S."/>
            <person name="Hornsby T."/>
            <person name="Jagels K."/>
            <person name="Krogh A."/>
            <person name="McLean J."/>
            <person name="Moule S."/>
            <person name="Murphy L.D."/>
            <person name="Oliver S."/>
            <person name="Osborne J."/>
            <person name="Quail M.A."/>
            <person name="Rajandream M.A."/>
            <person name="Rogers J."/>
            <person name="Rutter S."/>
            <person name="Seeger K."/>
            <person name="Skelton S."/>
            <person name="Squares S."/>
            <person name="Squares R."/>
            <person name="Sulston J.E."/>
            <person name="Taylor K."/>
            <person name="Whitehead S."/>
            <person name="Barrell B.G."/>
        </authorList>
    </citation>
    <scope>NUCLEOTIDE SEQUENCE [LARGE SCALE GENOMIC DNA]</scope>
    <source>
        <strain>ATCC 25618 / H37Rv</strain>
    </source>
</reference>
<reference key="2">
    <citation type="journal article" date="2008" name="BMC Syst. Biol.">
        <title>targetTB: a target identification pipeline for Mycobacterium tuberculosis through an interactome, reactome and genome-scale structural analysis.</title>
        <authorList>
            <person name="Raman K."/>
            <person name="Yeturu K."/>
            <person name="Chandra N."/>
        </authorList>
    </citation>
    <scope>IDENTIFICATION AS A DRUG TARGET [LARGE SCALE ANALYSIS]</scope>
</reference>
<reference key="3">
    <citation type="journal article" date="2011" name="Mol. Cell. Proteomics">
        <title>Proteogenomic analysis of Mycobacterium tuberculosis by high resolution mass spectrometry.</title>
        <authorList>
            <person name="Kelkar D.S."/>
            <person name="Kumar D."/>
            <person name="Kumar P."/>
            <person name="Balakrishnan L."/>
            <person name="Muthusamy B."/>
            <person name="Yadav A.K."/>
            <person name="Shrivastava P."/>
            <person name="Marimuthu A."/>
            <person name="Anand S."/>
            <person name="Sundaram H."/>
            <person name="Kingsbury R."/>
            <person name="Harsha H.C."/>
            <person name="Nair B."/>
            <person name="Prasad T.S."/>
            <person name="Chauhan D.S."/>
            <person name="Katoch K."/>
            <person name="Katoch V.M."/>
            <person name="Kumar P."/>
            <person name="Chaerkady R."/>
            <person name="Ramachandran S."/>
            <person name="Dash D."/>
            <person name="Pandey A."/>
        </authorList>
    </citation>
    <scope>IDENTIFICATION BY MASS SPECTROMETRY [LARGE SCALE ANALYSIS]</scope>
    <source>
        <strain>ATCC 25618 / H37Rv</strain>
    </source>
</reference>
<reference key="4">
    <citation type="journal article" date="2013" name="Acta Crystallogr. F">
        <title>Sample preparation, crystallization and structure solution of HisC from Mycobacterium tuberculosis.</title>
        <authorList>
            <person name="Nasir N."/>
            <person name="Vyas R."/>
            <person name="Biswal B.K."/>
        </authorList>
    </citation>
    <scope>SUBUNIT</scope>
    <scope>IDENTIFICATION BY MASS SPECTROMETRY</scope>
    <scope>CRYSTALLIZATION</scope>
    <source>
        <strain>H37Rv</strain>
    </source>
</reference>
<reference evidence="9 10" key="5">
    <citation type="journal article" date="2016" name="Sci. Rep.">
        <title>Crystal structures of Mycobacterium tuberculosis HspAT and ArAT reveal structural basis of their distinct substrate specificities.</title>
        <authorList>
            <person name="Nasir N."/>
            <person name="Anant A."/>
            <person name="Vyas R."/>
            <person name="Biswal B.K."/>
        </authorList>
    </citation>
    <scope>X-RAY CRYSTALLOGRAPHY (2.05 ANGSTROMS) OF APOENZYME AND IN COMPLEX WITH PYRIDOXAL 5'-PHOSPHATE</scope>
    <scope>FUNCTION</scope>
    <scope>CATALYTIC ACTIVITY</scope>
    <scope>COFACTOR</scope>
    <scope>ACTIVITY REGULATION</scope>
    <scope>BIOPHYSICOCHEMICAL PROPERTIES</scope>
    <scope>SUBUNIT</scope>
    <scope>DOMAIN</scope>
    <scope>MUTAGENESIS OF TYR-127</scope>
</reference>
<proteinExistence type="evidence at protein level"/>